<accession>P10624</accession>
<accession>B8DMB4</accession>
<keyword id="KW-0004">4Fe-4S</keyword>
<keyword id="KW-0903">Direct protein sequencing</keyword>
<keyword id="KW-0249">Electron transport</keyword>
<keyword id="KW-0408">Iron</keyword>
<keyword id="KW-0411">Iron-sulfur</keyword>
<keyword id="KW-0479">Metal-binding</keyword>
<keyword id="KW-0677">Repeat</keyword>
<keyword id="KW-0813">Transport</keyword>
<protein>
    <recommendedName>
        <fullName>Ferredoxin-2</fullName>
    </recommendedName>
    <alternativeName>
        <fullName>Ferredoxin II</fullName>
        <shortName>FdII</shortName>
    </alternativeName>
</protein>
<sequence>MAKYLYLDQDECMACESCVELCPEAFRMSSAGEYAEVIDPNTTAECVEDAISTCPVECIEWREE</sequence>
<comment type="function">
    <text>Ferredoxins are iron-sulfur proteins that transfer electrons in a wide variety of metabolic reactions.</text>
</comment>
<comment type="cofactor">
    <cofactor>
        <name>[4Fe-4S] cluster</name>
        <dbReference type="ChEBI" id="CHEBI:49883"/>
    </cofactor>
    <text>Binds 1 [4Fe-4S] cluster.</text>
</comment>
<comment type="subunit">
    <text>Homodimer.</text>
</comment>
<feature type="initiator methionine" description="Removed" evidence="2">
    <location>
        <position position="1"/>
    </location>
</feature>
<feature type="chain" id="PRO_0000159197" description="Ferredoxin-2">
    <location>
        <begin position="2"/>
        <end position="64"/>
    </location>
</feature>
<feature type="domain" description="4Fe-4S ferredoxin-type 1" evidence="1">
    <location>
        <begin position="3"/>
        <end position="31"/>
    </location>
</feature>
<feature type="domain" description="4Fe-4S ferredoxin-type 2" evidence="1">
    <location>
        <begin position="34"/>
        <end position="64"/>
    </location>
</feature>
<feature type="binding site">
    <location>
        <position position="12"/>
    </location>
    <ligand>
        <name>[4Fe-4S] cluster</name>
        <dbReference type="ChEBI" id="CHEBI:49883"/>
    </ligand>
</feature>
<feature type="binding site">
    <location>
        <position position="15"/>
    </location>
    <ligand>
        <name>[4Fe-4S] cluster</name>
        <dbReference type="ChEBI" id="CHEBI:49883"/>
    </ligand>
</feature>
<feature type="binding site">
    <location>
        <position position="18"/>
    </location>
    <ligand>
        <name>[4Fe-4S] cluster</name>
        <dbReference type="ChEBI" id="CHEBI:49883"/>
    </ligand>
</feature>
<feature type="binding site">
    <location>
        <position position="54"/>
    </location>
    <ligand>
        <name>[4Fe-4S] cluster</name>
        <dbReference type="ChEBI" id="CHEBI:49883"/>
    </ligand>
</feature>
<gene>
    <name type="ordered locus">DvMF_1814</name>
</gene>
<reference key="1">
    <citation type="submission" date="1997-07" db="EMBL/GenBank/DDBJ databases">
        <authorList>
            <person name="Kitamura M."/>
            <person name="Konishi T."/>
            <person name="Kawanishi K."/>
            <person name="Ohashi K."/>
            <person name="Kishida M."/>
            <person name="Kohno K."/>
            <person name="Akutsu H."/>
            <person name="Kumagai I."/>
            <person name="Nakaya T."/>
        </authorList>
    </citation>
    <scope>NUCLEOTIDE SEQUENCE [GENOMIC DNA]</scope>
</reference>
<reference key="2">
    <citation type="submission" date="2008-10" db="EMBL/GenBank/DDBJ databases">
        <title>Complete sequence of Desulfovibrio vulgaris str. 'Miyazaki F'.</title>
        <authorList>
            <person name="Lucas S."/>
            <person name="Copeland A."/>
            <person name="Lapidus A."/>
            <person name="Glavina del Rio T."/>
            <person name="Dalin E."/>
            <person name="Tice H."/>
            <person name="Bruce D."/>
            <person name="Goodwin L."/>
            <person name="Pitluck S."/>
            <person name="Sims D."/>
            <person name="Brettin T."/>
            <person name="Detter J.C."/>
            <person name="Han C."/>
            <person name="Larimer F."/>
            <person name="Land M."/>
            <person name="Hauser L."/>
            <person name="Kyrpides N."/>
            <person name="Mikhailova N."/>
            <person name="Hazen T.C."/>
            <person name="Richardson P."/>
        </authorList>
    </citation>
    <scope>NUCLEOTIDE SEQUENCE [LARGE SCALE GENOMIC DNA]</scope>
    <source>
        <strain>DSM 19637 / Miyazaki F</strain>
    </source>
</reference>
<reference key="3">
    <citation type="journal article" date="1988" name="Biochimie">
        <title>Characterization and complete amino acid sequence of ferredoxin II from Desulfovibrio vulgaris Miyazaki.</title>
        <authorList>
            <person name="Okawara N."/>
            <person name="Ogata M."/>
            <person name="Yagi T."/>
            <person name="Wakabayashi S."/>
            <person name="Matsubara H."/>
        </authorList>
    </citation>
    <scope>PROTEIN SEQUENCE OF 2-64</scope>
</reference>
<evidence type="ECO:0000255" key="1">
    <source>
        <dbReference type="PROSITE-ProRule" id="PRU00711"/>
    </source>
</evidence>
<evidence type="ECO:0000269" key="2">
    <source>
    </source>
</evidence>
<name>FER2_NITV9</name>
<proteinExistence type="evidence at protein level"/>
<organism>
    <name type="scientific">Nitratidesulfovibrio vulgaris (strain DSM 19637 / Miyazaki F)</name>
    <name type="common">Desulfovibrio vulgaris</name>
    <dbReference type="NCBI Taxonomy" id="883"/>
    <lineage>
        <taxon>Bacteria</taxon>
        <taxon>Pseudomonadati</taxon>
        <taxon>Thermodesulfobacteriota</taxon>
        <taxon>Desulfovibrionia</taxon>
        <taxon>Desulfovibrionales</taxon>
        <taxon>Desulfovibrionaceae</taxon>
        <taxon>Nitratidesulfovibrio</taxon>
    </lineage>
</organism>
<dbReference type="EMBL" id="AB005550">
    <property type="protein sequence ID" value="BAA21477.1"/>
    <property type="molecule type" value="Genomic_DNA"/>
</dbReference>
<dbReference type="EMBL" id="CP001197">
    <property type="protein sequence ID" value="ACL08758.1"/>
    <property type="molecule type" value="Genomic_DNA"/>
</dbReference>
<dbReference type="PIR" id="S07154">
    <property type="entry name" value="FEDV2V"/>
</dbReference>
<dbReference type="SMR" id="P10624"/>
<dbReference type="STRING" id="883.DvMF_1814"/>
<dbReference type="KEGG" id="dvm:DvMF_1814"/>
<dbReference type="eggNOG" id="COG1141">
    <property type="taxonomic scope" value="Bacteria"/>
</dbReference>
<dbReference type="HOGENOM" id="CLU_139698_6_4_7"/>
<dbReference type="OrthoDB" id="9803319at2"/>
<dbReference type="GO" id="GO:0051539">
    <property type="term" value="F:4 iron, 4 sulfur cluster binding"/>
    <property type="evidence" value="ECO:0007669"/>
    <property type="project" value="UniProtKB-KW"/>
</dbReference>
<dbReference type="GO" id="GO:0009055">
    <property type="term" value="F:electron transfer activity"/>
    <property type="evidence" value="ECO:0007669"/>
    <property type="project" value="InterPro"/>
</dbReference>
<dbReference type="GO" id="GO:0005506">
    <property type="term" value="F:iron ion binding"/>
    <property type="evidence" value="ECO:0007669"/>
    <property type="project" value="InterPro"/>
</dbReference>
<dbReference type="Gene3D" id="3.30.70.20">
    <property type="match status" value="1"/>
</dbReference>
<dbReference type="InterPro" id="IPR001080">
    <property type="entry name" value="3Fe4S_ferredoxin"/>
</dbReference>
<dbReference type="InterPro" id="IPR017896">
    <property type="entry name" value="4Fe4S_Fe-S-bd"/>
</dbReference>
<dbReference type="InterPro" id="IPR017900">
    <property type="entry name" value="4Fe4S_Fe_S_CS"/>
</dbReference>
<dbReference type="InterPro" id="IPR052395">
    <property type="entry name" value="ET_Ferredoxin"/>
</dbReference>
<dbReference type="PANTHER" id="PTHR39163">
    <property type="entry name" value="FERREDOXIN"/>
    <property type="match status" value="1"/>
</dbReference>
<dbReference type="PANTHER" id="PTHR39163:SF1">
    <property type="entry name" value="FERREDOXIN"/>
    <property type="match status" value="1"/>
</dbReference>
<dbReference type="Pfam" id="PF13370">
    <property type="entry name" value="Fer4_13"/>
    <property type="match status" value="1"/>
</dbReference>
<dbReference type="PRINTS" id="PR00352">
    <property type="entry name" value="3FE4SFRDOXIN"/>
</dbReference>
<dbReference type="SUPFAM" id="SSF54862">
    <property type="entry name" value="4Fe-4S ferredoxins"/>
    <property type="match status" value="1"/>
</dbReference>
<dbReference type="PROSITE" id="PS00198">
    <property type="entry name" value="4FE4S_FER_1"/>
    <property type="match status" value="1"/>
</dbReference>
<dbReference type="PROSITE" id="PS51379">
    <property type="entry name" value="4FE4S_FER_2"/>
    <property type="match status" value="2"/>
</dbReference>